<comment type="function">
    <text evidence="2">Component of the ubiquinol-cytochrome c reductase complex (complex III or cytochrome b-c1 complex) that is part of the mitochondrial respiratory chain. The b-c1 complex mediates electron transfer from ubiquinol to cytochrome c. Contributes to the generation of a proton gradient across the mitochondrial membrane that is then used for ATP synthesis.</text>
</comment>
<comment type="cofactor">
    <cofactor evidence="2">
        <name>heme b</name>
        <dbReference type="ChEBI" id="CHEBI:60344"/>
    </cofactor>
    <text evidence="2">Binds 2 heme b groups non-covalently.</text>
</comment>
<comment type="subunit">
    <text evidence="2">The cytochrome bc1 complex contains 11 subunits: 3 respiratory subunits (MT-CYB, CYC1 and UQCRFS1), 2 core proteins (UQCRC1 and UQCRC2) and 6 low-molecular weight proteins (UQCRH/QCR6, UQCRB/QCR7, UQCRQ/QCR8, UQCR10/QCR9, UQCR11/QCR10 and a cleavage product of UQCRFS1). This cytochrome bc1 complex then forms a dimer.</text>
</comment>
<comment type="subcellular location">
    <subcellularLocation>
        <location evidence="2">Mitochondrion inner membrane</location>
        <topology evidence="2">Multi-pass membrane protein</topology>
    </subcellularLocation>
</comment>
<comment type="miscellaneous">
    <text evidence="1">Heme 1 (or BL or b562) is low-potential and absorbs at about 562 nm, and heme 2 (or BH or b566) is high-potential and absorbs at about 566 nm.</text>
</comment>
<comment type="similarity">
    <text evidence="3 4">Belongs to the cytochrome b family.</text>
</comment>
<comment type="caution">
    <text evidence="2">The full-length protein contains only eight transmembrane helices, not nine as predicted by bioinformatics tools.</text>
</comment>
<proteinExistence type="inferred from homology"/>
<gene>
    <name type="primary">MT-CYB</name>
    <name type="synonym">COB</name>
    <name type="synonym">CYTB</name>
    <name type="synonym">MTCYB</name>
</gene>
<protein>
    <recommendedName>
        <fullName>Cytochrome b</fullName>
    </recommendedName>
    <alternativeName>
        <fullName>Complex III subunit 3</fullName>
    </alternativeName>
    <alternativeName>
        <fullName>Complex III subunit III</fullName>
    </alternativeName>
    <alternativeName>
        <fullName>Cytochrome b-c1 complex subunit 3</fullName>
    </alternativeName>
    <alternativeName>
        <fullName>Ubiquinol-cytochrome-c reductase complex cytochrome b subunit</fullName>
    </alternativeName>
</protein>
<feature type="chain" id="PRO_0000060838" description="Cytochrome b">
    <location>
        <begin position="1"/>
        <end position="379"/>
    </location>
</feature>
<feature type="transmembrane region" description="Helical" evidence="2">
    <location>
        <begin position="33"/>
        <end position="53"/>
    </location>
</feature>
<feature type="transmembrane region" description="Helical" evidence="2">
    <location>
        <begin position="77"/>
        <end position="98"/>
    </location>
</feature>
<feature type="transmembrane region" description="Helical" evidence="2">
    <location>
        <begin position="113"/>
        <end position="133"/>
    </location>
</feature>
<feature type="transmembrane region" description="Helical" evidence="2">
    <location>
        <begin position="178"/>
        <end position="198"/>
    </location>
</feature>
<feature type="transmembrane region" description="Helical" evidence="2">
    <location>
        <begin position="226"/>
        <end position="246"/>
    </location>
</feature>
<feature type="transmembrane region" description="Helical" evidence="2">
    <location>
        <begin position="288"/>
        <end position="308"/>
    </location>
</feature>
<feature type="transmembrane region" description="Helical" evidence="2">
    <location>
        <begin position="320"/>
        <end position="340"/>
    </location>
</feature>
<feature type="transmembrane region" description="Helical" evidence="2">
    <location>
        <begin position="347"/>
        <end position="367"/>
    </location>
</feature>
<feature type="binding site" description="axial binding residue" evidence="2">
    <location>
        <position position="83"/>
    </location>
    <ligand>
        <name>heme b</name>
        <dbReference type="ChEBI" id="CHEBI:60344"/>
        <label>b562</label>
    </ligand>
    <ligandPart>
        <name>Fe</name>
        <dbReference type="ChEBI" id="CHEBI:18248"/>
    </ligandPart>
</feature>
<feature type="binding site" description="axial binding residue" evidence="2">
    <location>
        <position position="97"/>
    </location>
    <ligand>
        <name>heme b</name>
        <dbReference type="ChEBI" id="CHEBI:60344"/>
        <label>b566</label>
    </ligand>
    <ligandPart>
        <name>Fe</name>
        <dbReference type="ChEBI" id="CHEBI:18248"/>
    </ligandPart>
</feature>
<feature type="binding site" description="axial binding residue" evidence="2">
    <location>
        <position position="182"/>
    </location>
    <ligand>
        <name>heme b</name>
        <dbReference type="ChEBI" id="CHEBI:60344"/>
        <label>b562</label>
    </ligand>
    <ligandPart>
        <name>Fe</name>
        <dbReference type="ChEBI" id="CHEBI:18248"/>
    </ligandPart>
</feature>
<feature type="binding site" description="axial binding residue" evidence="2">
    <location>
        <position position="196"/>
    </location>
    <ligand>
        <name>heme b</name>
        <dbReference type="ChEBI" id="CHEBI:60344"/>
        <label>b566</label>
    </ligand>
    <ligandPart>
        <name>Fe</name>
        <dbReference type="ChEBI" id="CHEBI:18248"/>
    </ligandPart>
</feature>
<feature type="binding site" evidence="2">
    <location>
        <position position="201"/>
    </location>
    <ligand>
        <name>a ubiquinone</name>
        <dbReference type="ChEBI" id="CHEBI:16389"/>
    </ligand>
</feature>
<sequence>MNNTRKSHPLIKIVNHSFIDLPTPSNISAWWNFGSLLGVCLGLQILTGLFLAMHYTADTTTAFSSVTHICRDVNYGWLIRYLHANGASMFFIFLYFHIGRGIYYGSYTFMNTWNIGILLLFAVMATAFMGYVLPWGQMSFWGATVITNLLSAIPYIGPTLVEWIWGGFSVDKATLTRFFAFHFILPFIITAMVMIHLLFLHETGSNNPSGMNSDSDKIPFHPYYTIKDVLGVLFMMITLMSLVMFTPDLLGDPDNYTPANPLNTPPHIKPEWYFLFAYAILRSIPNKLGGVLALVSSILILMLFPIMHSSKQRSMSFRPFSQCLMWLLVANLFILTWIGGQPVEYPFIIIGQLASVTYFFTILILMPSMALMENKLLKW</sequence>
<reference key="1">
    <citation type="journal article" date="1998" name="Mol. Phylogenet. Evol.">
        <title>The molecular phylogenetics of tuco-tucos (genus Ctenomys, Rodentia: Octodontidae) suggests an early burst of speciation.</title>
        <authorList>
            <person name="Lessa E.P."/>
            <person name="Cook J.A."/>
        </authorList>
    </citation>
    <scope>NUCLEOTIDE SEQUENCE [GENOMIC DNA]</scope>
    <source>
        <strain>Isolate NK 12606</strain>
        <strain>Isolate NK 12607</strain>
    </source>
</reference>
<organism>
    <name type="scientific">Ctenomys conoveri</name>
    <name type="common">Conover's tuco-tuco</name>
    <dbReference type="NCBI Taxonomy" id="61866"/>
    <lineage>
        <taxon>Eukaryota</taxon>
        <taxon>Metazoa</taxon>
        <taxon>Chordata</taxon>
        <taxon>Craniata</taxon>
        <taxon>Vertebrata</taxon>
        <taxon>Euteleostomi</taxon>
        <taxon>Mammalia</taxon>
        <taxon>Eutheria</taxon>
        <taxon>Euarchontoglires</taxon>
        <taxon>Glires</taxon>
        <taxon>Rodentia</taxon>
        <taxon>Hystricomorpha</taxon>
        <taxon>Ctenomyidae</taxon>
        <taxon>Ctenomys</taxon>
    </lineage>
</organism>
<evidence type="ECO:0000250" key="1"/>
<evidence type="ECO:0000250" key="2">
    <source>
        <dbReference type="UniProtKB" id="P00157"/>
    </source>
</evidence>
<evidence type="ECO:0000255" key="3">
    <source>
        <dbReference type="PROSITE-ProRule" id="PRU00967"/>
    </source>
</evidence>
<evidence type="ECO:0000255" key="4">
    <source>
        <dbReference type="PROSITE-ProRule" id="PRU00968"/>
    </source>
</evidence>
<keyword id="KW-0249">Electron transport</keyword>
<keyword id="KW-0349">Heme</keyword>
<keyword id="KW-0408">Iron</keyword>
<keyword id="KW-0472">Membrane</keyword>
<keyword id="KW-0479">Metal-binding</keyword>
<keyword id="KW-0496">Mitochondrion</keyword>
<keyword id="KW-0999">Mitochondrion inner membrane</keyword>
<keyword id="KW-0679">Respiratory chain</keyword>
<keyword id="KW-0812">Transmembrane</keyword>
<keyword id="KW-1133">Transmembrane helix</keyword>
<keyword id="KW-0813">Transport</keyword>
<keyword id="KW-0830">Ubiquinone</keyword>
<geneLocation type="mitochondrion"/>
<name>CYB_CTECO</name>
<accession>O21764</accession>
<dbReference type="EMBL" id="AF007054">
    <property type="protein sequence ID" value="AAB69213.1"/>
    <property type="molecule type" value="Genomic_DNA"/>
</dbReference>
<dbReference type="EMBL" id="AF007055">
    <property type="protein sequence ID" value="AAB69214.1"/>
    <property type="molecule type" value="Genomic_DNA"/>
</dbReference>
<dbReference type="SMR" id="O21764"/>
<dbReference type="GO" id="GO:0005743">
    <property type="term" value="C:mitochondrial inner membrane"/>
    <property type="evidence" value="ECO:0007669"/>
    <property type="project" value="UniProtKB-SubCell"/>
</dbReference>
<dbReference type="GO" id="GO:0045275">
    <property type="term" value="C:respiratory chain complex III"/>
    <property type="evidence" value="ECO:0007669"/>
    <property type="project" value="InterPro"/>
</dbReference>
<dbReference type="GO" id="GO:0046872">
    <property type="term" value="F:metal ion binding"/>
    <property type="evidence" value="ECO:0007669"/>
    <property type="project" value="UniProtKB-KW"/>
</dbReference>
<dbReference type="GO" id="GO:0008121">
    <property type="term" value="F:ubiquinol-cytochrome-c reductase activity"/>
    <property type="evidence" value="ECO:0007669"/>
    <property type="project" value="InterPro"/>
</dbReference>
<dbReference type="GO" id="GO:0006122">
    <property type="term" value="P:mitochondrial electron transport, ubiquinol to cytochrome c"/>
    <property type="evidence" value="ECO:0007669"/>
    <property type="project" value="TreeGrafter"/>
</dbReference>
<dbReference type="CDD" id="cd00290">
    <property type="entry name" value="cytochrome_b_C"/>
    <property type="match status" value="1"/>
</dbReference>
<dbReference type="CDD" id="cd00284">
    <property type="entry name" value="Cytochrome_b_N"/>
    <property type="match status" value="1"/>
</dbReference>
<dbReference type="FunFam" id="1.20.810.10:FF:000002">
    <property type="entry name" value="Cytochrome b"/>
    <property type="match status" value="1"/>
</dbReference>
<dbReference type="Gene3D" id="1.20.810.10">
    <property type="entry name" value="Cytochrome Bc1 Complex, Chain C"/>
    <property type="match status" value="1"/>
</dbReference>
<dbReference type="InterPro" id="IPR005798">
    <property type="entry name" value="Cyt_b/b6_C"/>
</dbReference>
<dbReference type="InterPro" id="IPR036150">
    <property type="entry name" value="Cyt_b/b6_C_sf"/>
</dbReference>
<dbReference type="InterPro" id="IPR005797">
    <property type="entry name" value="Cyt_b/b6_N"/>
</dbReference>
<dbReference type="InterPro" id="IPR027387">
    <property type="entry name" value="Cytb/b6-like_sf"/>
</dbReference>
<dbReference type="InterPro" id="IPR030689">
    <property type="entry name" value="Cytochrome_b"/>
</dbReference>
<dbReference type="InterPro" id="IPR048260">
    <property type="entry name" value="Cytochrome_b_C_euk/bac"/>
</dbReference>
<dbReference type="InterPro" id="IPR048259">
    <property type="entry name" value="Cytochrome_b_N_euk/bac"/>
</dbReference>
<dbReference type="InterPro" id="IPR016174">
    <property type="entry name" value="Di-haem_cyt_TM"/>
</dbReference>
<dbReference type="PANTHER" id="PTHR19271">
    <property type="entry name" value="CYTOCHROME B"/>
    <property type="match status" value="1"/>
</dbReference>
<dbReference type="PANTHER" id="PTHR19271:SF16">
    <property type="entry name" value="CYTOCHROME B"/>
    <property type="match status" value="1"/>
</dbReference>
<dbReference type="Pfam" id="PF00032">
    <property type="entry name" value="Cytochrom_B_C"/>
    <property type="match status" value="1"/>
</dbReference>
<dbReference type="Pfam" id="PF00033">
    <property type="entry name" value="Cytochrome_B"/>
    <property type="match status" value="1"/>
</dbReference>
<dbReference type="PIRSF" id="PIRSF038885">
    <property type="entry name" value="COB"/>
    <property type="match status" value="1"/>
</dbReference>
<dbReference type="SUPFAM" id="SSF81648">
    <property type="entry name" value="a domain/subunit of cytochrome bc1 complex (Ubiquinol-cytochrome c reductase)"/>
    <property type="match status" value="1"/>
</dbReference>
<dbReference type="SUPFAM" id="SSF81342">
    <property type="entry name" value="Transmembrane di-heme cytochromes"/>
    <property type="match status" value="1"/>
</dbReference>
<dbReference type="PROSITE" id="PS51003">
    <property type="entry name" value="CYTB_CTER"/>
    <property type="match status" value="1"/>
</dbReference>
<dbReference type="PROSITE" id="PS51002">
    <property type="entry name" value="CYTB_NTER"/>
    <property type="match status" value="1"/>
</dbReference>